<evidence type="ECO:0000255" key="1">
    <source>
        <dbReference type="HAMAP-Rule" id="MF_00376"/>
    </source>
</evidence>
<protein>
    <recommendedName>
        <fullName evidence="1">Dephospho-CoA kinase</fullName>
        <ecNumber evidence="1">2.7.1.24</ecNumber>
    </recommendedName>
    <alternativeName>
        <fullName evidence="1">Dephosphocoenzyme A kinase</fullName>
    </alternativeName>
</protein>
<dbReference type="EC" id="2.7.1.24" evidence="1"/>
<dbReference type="EMBL" id="CP000058">
    <property type="protein sequence ID" value="AAZ35552.1"/>
    <property type="molecule type" value="Genomic_DNA"/>
</dbReference>
<dbReference type="RefSeq" id="WP_011167725.1">
    <property type="nucleotide sequence ID" value="NC_005773.3"/>
</dbReference>
<dbReference type="SMR" id="Q48NC2"/>
<dbReference type="KEGG" id="psp:PSPPH_0817"/>
<dbReference type="eggNOG" id="COG0237">
    <property type="taxonomic scope" value="Bacteria"/>
</dbReference>
<dbReference type="HOGENOM" id="CLU_057180_1_2_6"/>
<dbReference type="UniPathway" id="UPA00241">
    <property type="reaction ID" value="UER00356"/>
</dbReference>
<dbReference type="Proteomes" id="UP000000551">
    <property type="component" value="Chromosome"/>
</dbReference>
<dbReference type="GO" id="GO:0005737">
    <property type="term" value="C:cytoplasm"/>
    <property type="evidence" value="ECO:0007669"/>
    <property type="project" value="UniProtKB-SubCell"/>
</dbReference>
<dbReference type="GO" id="GO:0005524">
    <property type="term" value="F:ATP binding"/>
    <property type="evidence" value="ECO:0007669"/>
    <property type="project" value="UniProtKB-UniRule"/>
</dbReference>
<dbReference type="GO" id="GO:0004140">
    <property type="term" value="F:dephospho-CoA kinase activity"/>
    <property type="evidence" value="ECO:0007669"/>
    <property type="project" value="UniProtKB-UniRule"/>
</dbReference>
<dbReference type="GO" id="GO:0015937">
    <property type="term" value="P:coenzyme A biosynthetic process"/>
    <property type="evidence" value="ECO:0007669"/>
    <property type="project" value="UniProtKB-UniRule"/>
</dbReference>
<dbReference type="CDD" id="cd02022">
    <property type="entry name" value="DPCK"/>
    <property type="match status" value="1"/>
</dbReference>
<dbReference type="Gene3D" id="3.40.50.300">
    <property type="entry name" value="P-loop containing nucleotide triphosphate hydrolases"/>
    <property type="match status" value="1"/>
</dbReference>
<dbReference type="HAMAP" id="MF_00376">
    <property type="entry name" value="Dephospho_CoA_kinase"/>
    <property type="match status" value="1"/>
</dbReference>
<dbReference type="InterPro" id="IPR001977">
    <property type="entry name" value="Depp_CoAkinase"/>
</dbReference>
<dbReference type="InterPro" id="IPR027417">
    <property type="entry name" value="P-loop_NTPase"/>
</dbReference>
<dbReference type="NCBIfam" id="TIGR00152">
    <property type="entry name" value="dephospho-CoA kinase"/>
    <property type="match status" value="1"/>
</dbReference>
<dbReference type="PANTHER" id="PTHR10695:SF46">
    <property type="entry name" value="BIFUNCTIONAL COENZYME A SYNTHASE-RELATED"/>
    <property type="match status" value="1"/>
</dbReference>
<dbReference type="PANTHER" id="PTHR10695">
    <property type="entry name" value="DEPHOSPHO-COA KINASE-RELATED"/>
    <property type="match status" value="1"/>
</dbReference>
<dbReference type="Pfam" id="PF01121">
    <property type="entry name" value="CoaE"/>
    <property type="match status" value="1"/>
</dbReference>
<dbReference type="SUPFAM" id="SSF52540">
    <property type="entry name" value="P-loop containing nucleoside triphosphate hydrolases"/>
    <property type="match status" value="1"/>
</dbReference>
<dbReference type="PROSITE" id="PS51219">
    <property type="entry name" value="DPCK"/>
    <property type="match status" value="1"/>
</dbReference>
<gene>
    <name evidence="1" type="primary">coaE</name>
    <name type="ordered locus">PSPPH_0817</name>
</gene>
<comment type="function">
    <text evidence="1">Catalyzes the phosphorylation of the 3'-hydroxyl group of dephosphocoenzyme A to form coenzyme A.</text>
</comment>
<comment type="catalytic activity">
    <reaction evidence="1">
        <text>3'-dephospho-CoA + ATP = ADP + CoA + H(+)</text>
        <dbReference type="Rhea" id="RHEA:18245"/>
        <dbReference type="ChEBI" id="CHEBI:15378"/>
        <dbReference type="ChEBI" id="CHEBI:30616"/>
        <dbReference type="ChEBI" id="CHEBI:57287"/>
        <dbReference type="ChEBI" id="CHEBI:57328"/>
        <dbReference type="ChEBI" id="CHEBI:456216"/>
        <dbReference type="EC" id="2.7.1.24"/>
    </reaction>
</comment>
<comment type="pathway">
    <text evidence="1">Cofactor biosynthesis; coenzyme A biosynthesis; CoA from (R)-pantothenate: step 5/5.</text>
</comment>
<comment type="subcellular location">
    <subcellularLocation>
        <location evidence="1">Cytoplasm</location>
    </subcellularLocation>
</comment>
<comment type="similarity">
    <text evidence="1">Belongs to the CoaE family.</text>
</comment>
<organism>
    <name type="scientific">Pseudomonas savastanoi pv. phaseolicola (strain 1448A / Race 6)</name>
    <name type="common">Pseudomonas syringae pv. phaseolicola (strain 1448A / Race 6)</name>
    <dbReference type="NCBI Taxonomy" id="264730"/>
    <lineage>
        <taxon>Bacteria</taxon>
        <taxon>Pseudomonadati</taxon>
        <taxon>Pseudomonadota</taxon>
        <taxon>Gammaproteobacteria</taxon>
        <taxon>Pseudomonadales</taxon>
        <taxon>Pseudomonadaceae</taxon>
        <taxon>Pseudomonas</taxon>
    </lineage>
</organism>
<proteinExistence type="inferred from homology"/>
<keyword id="KW-0067">ATP-binding</keyword>
<keyword id="KW-0173">Coenzyme A biosynthesis</keyword>
<keyword id="KW-0963">Cytoplasm</keyword>
<keyword id="KW-0418">Kinase</keyword>
<keyword id="KW-0547">Nucleotide-binding</keyword>
<keyword id="KW-0808">Transferase</keyword>
<reference key="1">
    <citation type="journal article" date="2005" name="J. Bacteriol.">
        <title>Whole-genome sequence analysis of Pseudomonas syringae pv. phaseolicola 1448A reveals divergence among pathovars in genes involved in virulence and transposition.</title>
        <authorList>
            <person name="Joardar V."/>
            <person name="Lindeberg M."/>
            <person name="Jackson R.W."/>
            <person name="Selengut J."/>
            <person name="Dodson R."/>
            <person name="Brinkac L.M."/>
            <person name="Daugherty S.C."/>
            <person name="DeBoy R.T."/>
            <person name="Durkin A.S."/>
            <person name="Gwinn Giglio M."/>
            <person name="Madupu R."/>
            <person name="Nelson W.C."/>
            <person name="Rosovitz M.J."/>
            <person name="Sullivan S.A."/>
            <person name="Crabtree J."/>
            <person name="Creasy T."/>
            <person name="Davidsen T.M."/>
            <person name="Haft D.H."/>
            <person name="Zafar N."/>
            <person name="Zhou L."/>
            <person name="Halpin R."/>
            <person name="Holley T."/>
            <person name="Khouri H.M."/>
            <person name="Feldblyum T.V."/>
            <person name="White O."/>
            <person name="Fraser C.M."/>
            <person name="Chatterjee A.K."/>
            <person name="Cartinhour S."/>
            <person name="Schneider D."/>
            <person name="Mansfield J.W."/>
            <person name="Collmer A."/>
            <person name="Buell R."/>
        </authorList>
    </citation>
    <scope>NUCLEOTIDE SEQUENCE [LARGE SCALE GENOMIC DNA]</scope>
    <source>
        <strain>1448A / Race 6</strain>
    </source>
</reference>
<sequence>MTHPDQKPWILGLTGGIGSGKSAAAQCFTNLGIDTVDADHASRWVVEPGRPALEQIAAHFGKGLLQASGELDRGALRKLIFENPEQRRWLEALLHPLINQEIVSHLAKAKSPYAILVSPLLIESGQYRMVQRLLVIDTPAHLQIERTMLRDSSSQEQVEAILKVQIQREDRLRHADDVLVNDRDHAWLNSEVERLHHFYLTLRGGQS</sequence>
<accession>Q48NC2</accession>
<name>COAE_PSE14</name>
<feature type="chain" id="PRO_0000243321" description="Dephospho-CoA kinase">
    <location>
        <begin position="1"/>
        <end position="207"/>
    </location>
</feature>
<feature type="domain" description="DPCK" evidence="1">
    <location>
        <begin position="10"/>
        <end position="207"/>
    </location>
</feature>
<feature type="binding site" evidence="1">
    <location>
        <begin position="18"/>
        <end position="23"/>
    </location>
    <ligand>
        <name>ATP</name>
        <dbReference type="ChEBI" id="CHEBI:30616"/>
    </ligand>
</feature>